<evidence type="ECO:0000255" key="1">
    <source>
        <dbReference type="HAMAP-Rule" id="MF_00580"/>
    </source>
</evidence>
<evidence type="ECO:0000256" key="2">
    <source>
        <dbReference type="SAM" id="MobiDB-lite"/>
    </source>
</evidence>
<evidence type="ECO:0000305" key="3"/>
<keyword id="KW-0143">Chaperone</keyword>
<keyword id="KW-0963">Cytoplasm</keyword>
<proteinExistence type="inferred from homology"/>
<accession>Q9Z463</accession>
<name>CH10_PARDE</name>
<feature type="chain" id="PRO_0000174798" description="Co-chaperonin GroES">
    <location>
        <begin position="1"/>
        <end position="95"/>
    </location>
</feature>
<feature type="region of interest" description="Disordered" evidence="2">
    <location>
        <begin position="20"/>
        <end position="45"/>
    </location>
</feature>
<protein>
    <recommendedName>
        <fullName evidence="1">Co-chaperonin GroES</fullName>
    </recommendedName>
    <alternativeName>
        <fullName evidence="1">10 kDa chaperonin</fullName>
    </alternativeName>
    <alternativeName>
        <fullName evidence="1">Chaperonin-10</fullName>
        <shortName evidence="1">Cpn10</shortName>
    </alternativeName>
</protein>
<organism>
    <name type="scientific">Paracoccus denitrificans</name>
    <dbReference type="NCBI Taxonomy" id="266"/>
    <lineage>
        <taxon>Bacteria</taxon>
        <taxon>Pseudomonadati</taxon>
        <taxon>Pseudomonadota</taxon>
        <taxon>Alphaproteobacteria</taxon>
        <taxon>Rhodobacterales</taxon>
        <taxon>Paracoccaceae</taxon>
        <taxon>Paracoccus</taxon>
    </lineage>
</organism>
<comment type="function">
    <text evidence="1">Together with the chaperonin GroEL, plays an essential role in assisting protein folding. The GroEL-GroES system forms a nano-cage that allows encapsulation of the non-native substrate proteins and provides a physical environment optimized to promote and accelerate protein folding. GroES binds to the apical surface of the GroEL ring, thereby capping the opening of the GroEL channel.</text>
</comment>
<comment type="subunit">
    <text evidence="1">Heptamer of 7 subunits arranged in a ring. Interacts with the chaperonin GroEL.</text>
</comment>
<comment type="subcellular location">
    <subcellularLocation>
        <location evidence="1">Cytoplasm</location>
    </subcellularLocation>
</comment>
<comment type="similarity">
    <text evidence="1 3">Belongs to the GroES chaperonin family.</text>
</comment>
<gene>
    <name evidence="1" type="primary">groES</name>
    <name evidence="1" type="synonym">groS</name>
    <name type="synonym">mopB</name>
</gene>
<reference key="1">
    <citation type="submission" date="1998-07" db="EMBL/GenBank/DDBJ databases">
        <title>Molecular cloning and sequencing of chaperonin from Paracoccus denitrificans.</title>
        <authorList>
            <person name="Yohda M."/>
            <person name="Sumi M."/>
            <person name="Yoshida M."/>
            <person name="Fukami T.A."/>
            <person name="Miki K."/>
        </authorList>
    </citation>
    <scope>NUCLEOTIDE SEQUENCE [GENOMIC DNA]</scope>
</reference>
<dbReference type="EMBL" id="AB015985">
    <property type="protein sequence ID" value="BAA36515.1"/>
    <property type="molecule type" value="Genomic_DNA"/>
</dbReference>
<dbReference type="SMR" id="Q9Z463"/>
<dbReference type="GO" id="GO:0005737">
    <property type="term" value="C:cytoplasm"/>
    <property type="evidence" value="ECO:0007669"/>
    <property type="project" value="UniProtKB-SubCell"/>
</dbReference>
<dbReference type="GO" id="GO:0005524">
    <property type="term" value="F:ATP binding"/>
    <property type="evidence" value="ECO:0007669"/>
    <property type="project" value="InterPro"/>
</dbReference>
<dbReference type="GO" id="GO:0046872">
    <property type="term" value="F:metal ion binding"/>
    <property type="evidence" value="ECO:0007669"/>
    <property type="project" value="TreeGrafter"/>
</dbReference>
<dbReference type="GO" id="GO:0044183">
    <property type="term" value="F:protein folding chaperone"/>
    <property type="evidence" value="ECO:0007669"/>
    <property type="project" value="InterPro"/>
</dbReference>
<dbReference type="GO" id="GO:0051087">
    <property type="term" value="F:protein-folding chaperone binding"/>
    <property type="evidence" value="ECO:0007669"/>
    <property type="project" value="TreeGrafter"/>
</dbReference>
<dbReference type="GO" id="GO:0051082">
    <property type="term" value="F:unfolded protein binding"/>
    <property type="evidence" value="ECO:0007669"/>
    <property type="project" value="TreeGrafter"/>
</dbReference>
<dbReference type="GO" id="GO:0051085">
    <property type="term" value="P:chaperone cofactor-dependent protein refolding"/>
    <property type="evidence" value="ECO:0007669"/>
    <property type="project" value="TreeGrafter"/>
</dbReference>
<dbReference type="CDD" id="cd00320">
    <property type="entry name" value="cpn10"/>
    <property type="match status" value="1"/>
</dbReference>
<dbReference type="FunFam" id="2.30.33.40:FF:000001">
    <property type="entry name" value="10 kDa chaperonin"/>
    <property type="match status" value="1"/>
</dbReference>
<dbReference type="Gene3D" id="2.30.33.40">
    <property type="entry name" value="GroES chaperonin"/>
    <property type="match status" value="1"/>
</dbReference>
<dbReference type="HAMAP" id="MF_00580">
    <property type="entry name" value="CH10"/>
    <property type="match status" value="1"/>
</dbReference>
<dbReference type="InterPro" id="IPR020818">
    <property type="entry name" value="Chaperonin_GroES"/>
</dbReference>
<dbReference type="InterPro" id="IPR037124">
    <property type="entry name" value="Chaperonin_GroES_sf"/>
</dbReference>
<dbReference type="InterPro" id="IPR018369">
    <property type="entry name" value="Chaprnonin_Cpn10_CS"/>
</dbReference>
<dbReference type="InterPro" id="IPR011032">
    <property type="entry name" value="GroES-like_sf"/>
</dbReference>
<dbReference type="NCBIfam" id="NF001527">
    <property type="entry name" value="PRK00364.1-2"/>
    <property type="match status" value="1"/>
</dbReference>
<dbReference type="NCBIfam" id="NF001529">
    <property type="entry name" value="PRK00364.1-5"/>
    <property type="match status" value="1"/>
</dbReference>
<dbReference type="NCBIfam" id="NF001531">
    <property type="entry name" value="PRK00364.2-2"/>
    <property type="match status" value="1"/>
</dbReference>
<dbReference type="NCBIfam" id="NF001533">
    <property type="entry name" value="PRK00364.2-4"/>
    <property type="match status" value="1"/>
</dbReference>
<dbReference type="PANTHER" id="PTHR10772">
    <property type="entry name" value="10 KDA HEAT SHOCK PROTEIN"/>
    <property type="match status" value="1"/>
</dbReference>
<dbReference type="PANTHER" id="PTHR10772:SF58">
    <property type="entry name" value="CO-CHAPERONIN GROES"/>
    <property type="match status" value="1"/>
</dbReference>
<dbReference type="Pfam" id="PF00166">
    <property type="entry name" value="Cpn10"/>
    <property type="match status" value="1"/>
</dbReference>
<dbReference type="PRINTS" id="PR00297">
    <property type="entry name" value="CHAPERONIN10"/>
</dbReference>
<dbReference type="SMART" id="SM00883">
    <property type="entry name" value="Cpn10"/>
    <property type="match status" value="1"/>
</dbReference>
<dbReference type="SUPFAM" id="SSF50129">
    <property type="entry name" value="GroES-like"/>
    <property type="match status" value="1"/>
</dbReference>
<dbReference type="PROSITE" id="PS00681">
    <property type="entry name" value="CHAPERONINS_CPN10"/>
    <property type="match status" value="1"/>
</dbReference>
<sequence>MAFKPLHDRVLVRRVQSDEKTKGGLIIPDSAKEKPAEGEITSVGEGARKDSGELIAPAVKAGDRVLFGKWSGTEVTVDGEELLIMKESDILGIIA</sequence>